<evidence type="ECO:0000250" key="1"/>
<evidence type="ECO:0000250" key="2">
    <source>
        <dbReference type="UniProtKB" id="P40848"/>
    </source>
</evidence>
<evidence type="ECO:0000250" key="3">
    <source>
        <dbReference type="UniProtKB" id="Q02792"/>
    </source>
</evidence>
<evidence type="ECO:0000255" key="4"/>
<evidence type="ECO:0000255" key="5">
    <source>
        <dbReference type="PROSITE-ProRule" id="PRU00047"/>
    </source>
</evidence>
<evidence type="ECO:0000256" key="6">
    <source>
        <dbReference type="SAM" id="MobiDB-lite"/>
    </source>
</evidence>
<evidence type="ECO:0000305" key="7"/>
<proteinExistence type="inferred from homology"/>
<sequence length="1032" mass="115795">MGVPALFRWLSKKYPKIISSVIEELPQEVNGEEIPVDITGPNPNGEEMDNLYLDMNGIVHPCTHPEGKPPPANEQEMMIEIFKYTDRVVNMVRPRKLLMIAVDGVAPRAKMNQQRARRFRSAQEAREQDEKKQEFQRMLAKQNGDKEQMLQEEVIQKTWDSNVITPGTPFMDILAASLRYWIAYKLNTDPAWEKLKIIISDATVPGEGEHKIMEFIRSQRASPEHDPNARHVIYGLDADLIMLGLATHEPHFRVLREDVFFQESKQRTCHLCGQPGHKAEECRGQAKEKNGEFDEKGKGATLKPFIWLHVSILREYLAAELYVPHQPFPFDLERALDDWVFMCFFVGNDFLPHLPSLDIREDGIDTLIAIWRDNIPLMGGYLTQDGRVDLKKAQLILQGLAKQEDAIFRRRRQAEERKLANEKRRKQEEKARNEERARKRRRSSPSYDAIESPTHAKPRSAGAAAAPPAGLELITPARGELARQTRELTHSMVVNRGNVYRANMANKSAAAVLKSKLLGGQDGQPSDDGESTAESDAQLDAAGPVLGKRKADEAEVGQLGTETPDKPEPAKADELPPDTVRLWEEGYADRYYEQKFGVDPQDKEFRHKVARAYAEGLAWVLLYYFQGCPSWTWYYPYHYAPFAADFVDIGDMELSFEKGTPFKPYEQLMGVLPASSNHAIPKVFHSLMTEPDSEIIDFYPEDFPVDLNGKKFAWQGVVLLPFIDEKRLLAAMSKKYPLLTEDEKARNTVGRDVLLLSESHPLYQDLVSNFYSKKQGAPKYKLNMRVSDGLAGKVEKNEAYIPHSSLVSSLEEYGMPSLEDDRSIMVNYEIPKSTNIHKSMLLRGVKFGPPALDNADIQATKSRAQHSGRSYGGAPFRGGRGGRMNYAGDRQSHGNDRPNPFAAHLDPKFMPGANPGAPMGMPSGWVPPSGNFSRGPPPPPRGGTSYGYGSQQYGSYGGYGQQQSYQQSSHSQSDYYGRGPPAPYNNGPADYYSGRPSGYGPQESRGGGYNRGGYRGGRDTYSSSGHGGYGRY</sequence>
<comment type="function">
    <text evidence="2 3">Possesses 5'-&gt;3' exoribonuclease activity (By similarity). Required for the processing of nuclear mRNA and rRNA precursors. May promote the termination of transcription by RNA polymerase II (By similarity). Essential for vegetative cell growth and chromosome segregation (By similarity).</text>
</comment>
<comment type="subunit">
    <text evidence="2">Interacts with rai1; the interaction is direct, stabilizes rat1 protein structure and may stimulate its exoribonuclease activity (By similarity). The interaction also stimulates rai1 pyrophosphohydrolase activity, probably by recruiting it to mRNA substrates (By similarity).</text>
</comment>
<comment type="subcellular location">
    <subcellularLocation>
        <location evidence="1">Nucleus</location>
    </subcellularLocation>
</comment>
<comment type="similarity">
    <text evidence="7">Belongs to the 5'-3' exonuclease family. XRN2/RAT1 subfamily.</text>
</comment>
<gene>
    <name type="primary">rat1</name>
    <name type="ORF">AN0707</name>
</gene>
<dbReference type="EC" id="3.1.13.-"/>
<dbReference type="EMBL" id="AACD01000010">
    <property type="protein sequence ID" value="EAA65483.1"/>
    <property type="molecule type" value="Genomic_DNA"/>
</dbReference>
<dbReference type="EMBL" id="BN001308">
    <property type="protein sequence ID" value="CBF88946.1"/>
    <property type="molecule type" value="Genomic_DNA"/>
</dbReference>
<dbReference type="RefSeq" id="XP_658311.1">
    <property type="nucleotide sequence ID" value="XM_653219.1"/>
</dbReference>
<dbReference type="SMR" id="Q5BFH3"/>
<dbReference type="FunCoup" id="Q5BFH3">
    <property type="interactions" value="1040"/>
</dbReference>
<dbReference type="STRING" id="227321.Q5BFH3"/>
<dbReference type="EnsemblFungi" id="CBF88946">
    <property type="protein sequence ID" value="CBF88946"/>
    <property type="gene ID" value="ANIA_00707"/>
</dbReference>
<dbReference type="KEGG" id="ani:ANIA_00707"/>
<dbReference type="eggNOG" id="KOG2044">
    <property type="taxonomic scope" value="Eukaryota"/>
</dbReference>
<dbReference type="HOGENOM" id="CLU_006038_1_1_1"/>
<dbReference type="InParanoid" id="Q5BFH3"/>
<dbReference type="OMA" id="ITHDMVV"/>
<dbReference type="OrthoDB" id="28245at2759"/>
<dbReference type="Proteomes" id="UP000000560">
    <property type="component" value="Chromosome VIII"/>
</dbReference>
<dbReference type="GO" id="GO:0005634">
    <property type="term" value="C:nucleus"/>
    <property type="evidence" value="ECO:0000318"/>
    <property type="project" value="GO_Central"/>
</dbReference>
<dbReference type="GO" id="GO:0004534">
    <property type="term" value="F:5'-3' RNA exonuclease activity"/>
    <property type="evidence" value="ECO:0000318"/>
    <property type="project" value="GO_Central"/>
</dbReference>
<dbReference type="GO" id="GO:0003723">
    <property type="term" value="F:RNA binding"/>
    <property type="evidence" value="ECO:0000318"/>
    <property type="project" value="GO_Central"/>
</dbReference>
<dbReference type="GO" id="GO:0008270">
    <property type="term" value="F:zinc ion binding"/>
    <property type="evidence" value="ECO:0007669"/>
    <property type="project" value="UniProtKB-KW"/>
</dbReference>
<dbReference type="GO" id="GO:0006353">
    <property type="term" value="P:DNA-templated transcription termination"/>
    <property type="evidence" value="ECO:0007669"/>
    <property type="project" value="UniProtKB-KW"/>
</dbReference>
<dbReference type="GO" id="GO:0006397">
    <property type="term" value="P:mRNA processing"/>
    <property type="evidence" value="ECO:0007669"/>
    <property type="project" value="UniProtKB-KW"/>
</dbReference>
<dbReference type="GO" id="GO:0000956">
    <property type="term" value="P:nuclear-transcribed mRNA catabolic process"/>
    <property type="evidence" value="ECO:0000318"/>
    <property type="project" value="GO_Central"/>
</dbReference>
<dbReference type="GO" id="GO:0051984">
    <property type="term" value="P:positive regulation of chromosome segregation"/>
    <property type="evidence" value="ECO:0007669"/>
    <property type="project" value="EnsemblFungi"/>
</dbReference>
<dbReference type="GO" id="GO:0180037">
    <property type="term" value="P:rapid tRNA decay"/>
    <property type="evidence" value="ECO:0007669"/>
    <property type="project" value="EnsemblFungi"/>
</dbReference>
<dbReference type="GO" id="GO:0006364">
    <property type="term" value="P:rRNA processing"/>
    <property type="evidence" value="ECO:0007669"/>
    <property type="project" value="UniProtKB-KW"/>
</dbReference>
<dbReference type="CDD" id="cd18673">
    <property type="entry name" value="PIN_XRN1-2-like"/>
    <property type="match status" value="1"/>
</dbReference>
<dbReference type="FunFam" id="1.25.40.1050:FF:000002">
    <property type="entry name" value="5'-3' exoribonuclease"/>
    <property type="match status" value="1"/>
</dbReference>
<dbReference type="FunFam" id="3.40.50.12390:FF:000003">
    <property type="entry name" value="5'-3' exoribonuclease"/>
    <property type="match status" value="1"/>
</dbReference>
<dbReference type="FunFam" id="3.40.50.12390:FF:000005">
    <property type="entry name" value="5'-3' exoribonuclease 2"/>
    <property type="match status" value="1"/>
</dbReference>
<dbReference type="Gene3D" id="1.25.40.1050">
    <property type="match status" value="1"/>
</dbReference>
<dbReference type="Gene3D" id="3.40.50.12390">
    <property type="match status" value="2"/>
</dbReference>
<dbReference type="InterPro" id="IPR027073">
    <property type="entry name" value="5_3_exoribonuclease"/>
</dbReference>
<dbReference type="InterPro" id="IPR041412">
    <property type="entry name" value="Xrn1_helical"/>
</dbReference>
<dbReference type="InterPro" id="IPR004859">
    <property type="entry name" value="Xrn1_N"/>
</dbReference>
<dbReference type="InterPro" id="IPR017151">
    <property type="entry name" value="Xrn2/3/4"/>
</dbReference>
<dbReference type="InterPro" id="IPR001878">
    <property type="entry name" value="Znf_CCHC"/>
</dbReference>
<dbReference type="PANTHER" id="PTHR12341:SF41">
    <property type="entry name" value="5'-3' EXORIBONUCLEASE 2"/>
    <property type="match status" value="1"/>
</dbReference>
<dbReference type="PANTHER" id="PTHR12341">
    <property type="entry name" value="5'-&gt;3' EXORIBONUCLEASE"/>
    <property type="match status" value="1"/>
</dbReference>
<dbReference type="Pfam" id="PF17846">
    <property type="entry name" value="XRN_M"/>
    <property type="match status" value="1"/>
</dbReference>
<dbReference type="Pfam" id="PF03159">
    <property type="entry name" value="XRN_N"/>
    <property type="match status" value="1"/>
</dbReference>
<dbReference type="PIRSF" id="PIRSF037239">
    <property type="entry name" value="Exonuclease_Xrn2"/>
    <property type="match status" value="1"/>
</dbReference>
<dbReference type="SMART" id="SM00343">
    <property type="entry name" value="ZnF_C2HC"/>
    <property type="match status" value="1"/>
</dbReference>
<dbReference type="PROSITE" id="PS50158">
    <property type="entry name" value="ZF_CCHC"/>
    <property type="match status" value="1"/>
</dbReference>
<organism>
    <name type="scientific">Emericella nidulans (strain FGSC A4 / ATCC 38163 / CBS 112.46 / NRRL 194 / M139)</name>
    <name type="common">Aspergillus nidulans</name>
    <dbReference type="NCBI Taxonomy" id="227321"/>
    <lineage>
        <taxon>Eukaryota</taxon>
        <taxon>Fungi</taxon>
        <taxon>Dikarya</taxon>
        <taxon>Ascomycota</taxon>
        <taxon>Pezizomycotina</taxon>
        <taxon>Eurotiomycetes</taxon>
        <taxon>Eurotiomycetidae</taxon>
        <taxon>Eurotiales</taxon>
        <taxon>Aspergillaceae</taxon>
        <taxon>Aspergillus</taxon>
        <taxon>Aspergillus subgen. Nidulantes</taxon>
    </lineage>
</organism>
<protein>
    <recommendedName>
        <fullName>5'-3' exoribonuclease 2</fullName>
        <ecNumber>3.1.13.-</ecNumber>
    </recommendedName>
</protein>
<accession>Q5BFH3</accession>
<accession>C8VRD3</accession>
<keyword id="KW-0175">Coiled coil</keyword>
<keyword id="KW-0269">Exonuclease</keyword>
<keyword id="KW-0378">Hydrolase</keyword>
<keyword id="KW-0479">Metal-binding</keyword>
<keyword id="KW-0507">mRNA processing</keyword>
<keyword id="KW-0540">Nuclease</keyword>
<keyword id="KW-0539">Nucleus</keyword>
<keyword id="KW-1185">Reference proteome</keyword>
<keyword id="KW-0698">rRNA processing</keyword>
<keyword id="KW-0804">Transcription</keyword>
<keyword id="KW-0805">Transcription regulation</keyword>
<keyword id="KW-0806">Transcription termination</keyword>
<keyword id="KW-0862">Zinc</keyword>
<keyword id="KW-0863">Zinc-finger</keyword>
<name>XRN2_EMENI</name>
<feature type="initiator methionine" description="Removed" evidence="1">
    <location>
        <position position="1"/>
    </location>
</feature>
<feature type="chain" id="PRO_0000249925" description="5'-3' exoribonuclease 2">
    <location>
        <begin position="2"/>
        <end position="1032"/>
    </location>
</feature>
<feature type="zinc finger region" description="CCHC-type" evidence="5">
    <location>
        <begin position="267"/>
        <end position="284"/>
    </location>
</feature>
<feature type="region of interest" description="Disordered" evidence="6">
    <location>
        <begin position="416"/>
        <end position="466"/>
    </location>
</feature>
<feature type="region of interest" description="Disordered" evidence="6">
    <location>
        <begin position="543"/>
        <end position="579"/>
    </location>
</feature>
<feature type="region of interest" description="Disordered" evidence="6">
    <location>
        <begin position="861"/>
        <end position="1032"/>
    </location>
</feature>
<feature type="coiled-coil region" evidence="4">
    <location>
        <begin position="120"/>
        <end position="152"/>
    </location>
</feature>
<feature type="coiled-coil region" evidence="4">
    <location>
        <begin position="406"/>
        <end position="442"/>
    </location>
</feature>
<feature type="compositionally biased region" description="Basic and acidic residues" evidence="6">
    <location>
        <begin position="416"/>
        <end position="437"/>
    </location>
</feature>
<feature type="compositionally biased region" description="Basic and acidic residues" evidence="6">
    <location>
        <begin position="563"/>
        <end position="574"/>
    </location>
</feature>
<feature type="compositionally biased region" description="Low complexity" evidence="6">
    <location>
        <begin position="910"/>
        <end position="934"/>
    </location>
</feature>
<feature type="compositionally biased region" description="Low complexity" evidence="6">
    <location>
        <begin position="961"/>
        <end position="977"/>
    </location>
</feature>
<feature type="compositionally biased region" description="Gly residues" evidence="6">
    <location>
        <begin position="1005"/>
        <end position="1015"/>
    </location>
</feature>
<reference key="1">
    <citation type="journal article" date="2005" name="Nature">
        <title>Sequencing of Aspergillus nidulans and comparative analysis with A. fumigatus and A. oryzae.</title>
        <authorList>
            <person name="Galagan J.E."/>
            <person name="Calvo S.E."/>
            <person name="Cuomo C."/>
            <person name="Ma L.-J."/>
            <person name="Wortman J.R."/>
            <person name="Batzoglou S."/>
            <person name="Lee S.-I."/>
            <person name="Bastuerkmen M."/>
            <person name="Spevak C.C."/>
            <person name="Clutterbuck J."/>
            <person name="Kapitonov V."/>
            <person name="Jurka J."/>
            <person name="Scazzocchio C."/>
            <person name="Farman M.L."/>
            <person name="Butler J."/>
            <person name="Purcell S."/>
            <person name="Harris S."/>
            <person name="Braus G.H."/>
            <person name="Draht O."/>
            <person name="Busch S."/>
            <person name="D'Enfert C."/>
            <person name="Bouchier C."/>
            <person name="Goldman G.H."/>
            <person name="Bell-Pedersen D."/>
            <person name="Griffiths-Jones S."/>
            <person name="Doonan J.H."/>
            <person name="Yu J."/>
            <person name="Vienken K."/>
            <person name="Pain A."/>
            <person name="Freitag M."/>
            <person name="Selker E.U."/>
            <person name="Archer D.B."/>
            <person name="Penalva M.A."/>
            <person name="Oakley B.R."/>
            <person name="Momany M."/>
            <person name="Tanaka T."/>
            <person name="Kumagai T."/>
            <person name="Asai K."/>
            <person name="Machida M."/>
            <person name="Nierman W.C."/>
            <person name="Denning D.W."/>
            <person name="Caddick M.X."/>
            <person name="Hynes M."/>
            <person name="Paoletti M."/>
            <person name="Fischer R."/>
            <person name="Miller B.L."/>
            <person name="Dyer P.S."/>
            <person name="Sachs M.S."/>
            <person name="Osmani S.A."/>
            <person name="Birren B.W."/>
        </authorList>
    </citation>
    <scope>NUCLEOTIDE SEQUENCE [LARGE SCALE GENOMIC DNA]</scope>
    <source>
        <strain>FGSC A4 / ATCC 38163 / CBS 112.46 / NRRL 194 / M139</strain>
    </source>
</reference>
<reference key="2">
    <citation type="journal article" date="2009" name="Fungal Genet. Biol.">
        <title>The 2008 update of the Aspergillus nidulans genome annotation: a community effort.</title>
        <authorList>
            <person name="Wortman J.R."/>
            <person name="Gilsenan J.M."/>
            <person name="Joardar V."/>
            <person name="Deegan J."/>
            <person name="Clutterbuck J."/>
            <person name="Andersen M.R."/>
            <person name="Archer D."/>
            <person name="Bencina M."/>
            <person name="Braus G."/>
            <person name="Coutinho P."/>
            <person name="von Dohren H."/>
            <person name="Doonan J."/>
            <person name="Driessen A.J."/>
            <person name="Durek P."/>
            <person name="Espeso E."/>
            <person name="Fekete E."/>
            <person name="Flipphi M."/>
            <person name="Estrada C.G."/>
            <person name="Geysens S."/>
            <person name="Goldman G."/>
            <person name="de Groot P.W."/>
            <person name="Hansen K."/>
            <person name="Harris S.D."/>
            <person name="Heinekamp T."/>
            <person name="Helmstaedt K."/>
            <person name="Henrissat B."/>
            <person name="Hofmann G."/>
            <person name="Homan T."/>
            <person name="Horio T."/>
            <person name="Horiuchi H."/>
            <person name="James S."/>
            <person name="Jones M."/>
            <person name="Karaffa L."/>
            <person name="Karanyi Z."/>
            <person name="Kato M."/>
            <person name="Keller N."/>
            <person name="Kelly D.E."/>
            <person name="Kiel J.A."/>
            <person name="Kim J.M."/>
            <person name="van der Klei I.J."/>
            <person name="Klis F.M."/>
            <person name="Kovalchuk A."/>
            <person name="Krasevec N."/>
            <person name="Kubicek C.P."/>
            <person name="Liu B."/>
            <person name="Maccabe A."/>
            <person name="Meyer V."/>
            <person name="Mirabito P."/>
            <person name="Miskei M."/>
            <person name="Mos M."/>
            <person name="Mullins J."/>
            <person name="Nelson D.R."/>
            <person name="Nielsen J."/>
            <person name="Oakley B.R."/>
            <person name="Osmani S.A."/>
            <person name="Pakula T."/>
            <person name="Paszewski A."/>
            <person name="Paulsen I."/>
            <person name="Pilsyk S."/>
            <person name="Pocsi I."/>
            <person name="Punt P.J."/>
            <person name="Ram A.F."/>
            <person name="Ren Q."/>
            <person name="Robellet X."/>
            <person name="Robson G."/>
            <person name="Seiboth B."/>
            <person name="van Solingen P."/>
            <person name="Specht T."/>
            <person name="Sun J."/>
            <person name="Taheri-Talesh N."/>
            <person name="Takeshita N."/>
            <person name="Ussery D."/>
            <person name="vanKuyk P.A."/>
            <person name="Visser H."/>
            <person name="van de Vondervoort P.J."/>
            <person name="de Vries R.P."/>
            <person name="Walton J."/>
            <person name="Xiang X."/>
            <person name="Xiong Y."/>
            <person name="Zeng A.P."/>
            <person name="Brandt B.W."/>
            <person name="Cornell M.J."/>
            <person name="van den Hondel C.A."/>
            <person name="Visser J."/>
            <person name="Oliver S.G."/>
            <person name="Turner G."/>
        </authorList>
    </citation>
    <scope>GENOME REANNOTATION</scope>
    <source>
        <strain>FGSC A4 / ATCC 38163 / CBS 112.46 / NRRL 194 / M139</strain>
    </source>
</reference>